<sequence length="270" mass="30831">MTRRNNPELNDEREPIDKIKASIDLKKKTIRRNKRKRRLIKMLQFLIVIGVLIGIYYFDKSDASRVHNVRVNGNVILSDAEIKDALNIHENQRIYLTFKPFINHKGKKVKGIDNIDANVYYRQGIINLNVTEKKAVGYTLEPSIRIYFEDGFYKELETLNPSVIERLPLLVGFTEESISESLLSALATIDDGSMASVSEIHFEPTKVEPDYMRIVMNNDYFVFTNVETLPQLNKYATIISGADSNARCIEFIEYGPTEETQSAVVKACGS</sequence>
<evidence type="ECO:0000255" key="1">
    <source>
        <dbReference type="HAMAP-Rule" id="MF_00912"/>
    </source>
</evidence>
<evidence type="ECO:0000255" key="2">
    <source>
        <dbReference type="PROSITE-ProRule" id="PRU01115"/>
    </source>
</evidence>
<accession>F5WT83</accession>
<organism>
    <name type="scientific">Erysipelothrix rhusiopathiae (strain Fujisawa)</name>
    <dbReference type="NCBI Taxonomy" id="650150"/>
    <lineage>
        <taxon>Bacteria</taxon>
        <taxon>Bacillati</taxon>
        <taxon>Bacillota</taxon>
        <taxon>Erysipelotrichia</taxon>
        <taxon>Erysipelotrichales</taxon>
        <taxon>Erysipelotrichaceae</taxon>
        <taxon>Erysipelothrix</taxon>
    </lineage>
</organism>
<name>DIVIB_ERYRF</name>
<dbReference type="EMBL" id="AP012027">
    <property type="protein sequence ID" value="BAK31965.1"/>
    <property type="molecule type" value="Genomic_DNA"/>
</dbReference>
<dbReference type="RefSeq" id="WP_003773736.1">
    <property type="nucleotide sequence ID" value="NC_015601.1"/>
</dbReference>
<dbReference type="GeneID" id="41396449"/>
<dbReference type="KEGG" id="erh:ERH_0910"/>
<dbReference type="eggNOG" id="COG1589">
    <property type="taxonomic scope" value="Bacteria"/>
</dbReference>
<dbReference type="HOGENOM" id="CLU_1029508_0_0_9"/>
<dbReference type="GO" id="GO:0032153">
    <property type="term" value="C:cell division site"/>
    <property type="evidence" value="ECO:0007669"/>
    <property type="project" value="UniProtKB-UniRule"/>
</dbReference>
<dbReference type="GO" id="GO:0005886">
    <property type="term" value="C:plasma membrane"/>
    <property type="evidence" value="ECO:0007669"/>
    <property type="project" value="UniProtKB-SubCell"/>
</dbReference>
<dbReference type="GO" id="GO:0043093">
    <property type="term" value="P:FtsZ-dependent cytokinesis"/>
    <property type="evidence" value="ECO:0007669"/>
    <property type="project" value="UniProtKB-UniRule"/>
</dbReference>
<dbReference type="Gene3D" id="3.40.50.10960">
    <property type="match status" value="1"/>
</dbReference>
<dbReference type="HAMAP" id="MF_00912">
    <property type="entry name" value="DivIB"/>
    <property type="match status" value="1"/>
</dbReference>
<dbReference type="InterPro" id="IPR026580">
    <property type="entry name" value="DivIB"/>
</dbReference>
<dbReference type="InterPro" id="IPR050487">
    <property type="entry name" value="FtsQ_DivIB"/>
</dbReference>
<dbReference type="InterPro" id="IPR034746">
    <property type="entry name" value="POTRA"/>
</dbReference>
<dbReference type="PANTHER" id="PTHR37820">
    <property type="entry name" value="CELL DIVISION PROTEIN DIVIB"/>
    <property type="match status" value="1"/>
</dbReference>
<dbReference type="PANTHER" id="PTHR37820:SF1">
    <property type="entry name" value="CELL DIVISION PROTEIN FTSQ"/>
    <property type="match status" value="1"/>
</dbReference>
<dbReference type="PROSITE" id="PS51779">
    <property type="entry name" value="POTRA"/>
    <property type="match status" value="1"/>
</dbReference>
<comment type="function">
    <text evidence="1">Cell division protein that may be involved in stabilizing or promoting the assembly of the division complex.</text>
</comment>
<comment type="subcellular location">
    <subcellularLocation>
        <location evidence="1">Cell membrane</location>
        <topology evidence="1">Single-pass type II membrane protein</topology>
    </subcellularLocation>
    <text evidence="1">Localizes to the division septum.</text>
</comment>
<comment type="similarity">
    <text evidence="1">Belongs to the FtsQ/DivIB family. DivIB subfamily.</text>
</comment>
<reference key="1">
    <citation type="journal article" date="2011" name="J. Bacteriol.">
        <title>The genome of Erysipelothrix rhusiopathiae, the causative agent of swine erysipelas, reveals new insights into the evolution of firmicutes and the organism's intracellular adaptations.</title>
        <authorList>
            <person name="Ogawa Y."/>
            <person name="Ooka T."/>
            <person name="Shi F."/>
            <person name="Ogura Y."/>
            <person name="Nakayama K."/>
            <person name="Hayashi T."/>
            <person name="Shimoji Y."/>
        </authorList>
    </citation>
    <scope>NUCLEOTIDE SEQUENCE [LARGE SCALE GENOMIC DNA]</scope>
    <source>
        <strain>Fujisawa</strain>
    </source>
</reference>
<gene>
    <name evidence="1" type="primary">divIB</name>
    <name type="ordered locus">ERH_0910</name>
</gene>
<keyword id="KW-0131">Cell cycle</keyword>
<keyword id="KW-0132">Cell division</keyword>
<keyword id="KW-1003">Cell membrane</keyword>
<keyword id="KW-0472">Membrane</keyword>
<keyword id="KW-0812">Transmembrane</keyword>
<keyword id="KW-1133">Transmembrane helix</keyword>
<protein>
    <recommendedName>
        <fullName evidence="1">Cell division protein DivIB</fullName>
    </recommendedName>
</protein>
<feature type="chain" id="PRO_0000414767" description="Cell division protein DivIB">
    <location>
        <begin position="1"/>
        <end position="270"/>
    </location>
</feature>
<feature type="topological domain" description="Cytoplasmic" evidence="1">
    <location>
        <begin position="1"/>
        <end position="38"/>
    </location>
</feature>
<feature type="transmembrane region" description="Helical" evidence="1">
    <location>
        <begin position="39"/>
        <end position="59"/>
    </location>
</feature>
<feature type="topological domain" description="Extracellular" evidence="1">
    <location>
        <begin position="60"/>
        <end position="270"/>
    </location>
</feature>
<feature type="domain" description="POTRA" evidence="2">
    <location>
        <begin position="64"/>
        <end position="135"/>
    </location>
</feature>
<proteinExistence type="inferred from homology"/>